<feature type="chain" id="PRO_1000016724" description="Holliday junction resolvase RecU">
    <location>
        <begin position="1"/>
        <end position="201"/>
    </location>
</feature>
<feature type="binding site" evidence="1">
    <location>
        <position position="85"/>
    </location>
    <ligand>
        <name>Mg(2+)</name>
        <dbReference type="ChEBI" id="CHEBI:18420"/>
    </ligand>
</feature>
<feature type="binding site" evidence="1">
    <location>
        <position position="87"/>
    </location>
    <ligand>
        <name>Mg(2+)</name>
        <dbReference type="ChEBI" id="CHEBI:18420"/>
    </ligand>
</feature>
<feature type="binding site" evidence="1">
    <location>
        <position position="100"/>
    </location>
    <ligand>
        <name>Mg(2+)</name>
        <dbReference type="ChEBI" id="CHEBI:18420"/>
    </ligand>
</feature>
<feature type="binding site" evidence="1">
    <location>
        <position position="119"/>
    </location>
    <ligand>
        <name>Mg(2+)</name>
        <dbReference type="ChEBI" id="CHEBI:18420"/>
    </ligand>
</feature>
<feature type="site" description="Transition state stabilizer" evidence="1">
    <location>
        <position position="102"/>
    </location>
</feature>
<protein>
    <recommendedName>
        <fullName evidence="1">Holliday junction resolvase RecU</fullName>
        <ecNumber evidence="1">3.1.21.10</ecNumber>
    </recommendedName>
    <alternativeName>
        <fullName evidence="1">Recombination protein U homolog</fullName>
    </alternativeName>
</protein>
<evidence type="ECO:0000255" key="1">
    <source>
        <dbReference type="HAMAP-Rule" id="MF_00130"/>
    </source>
</evidence>
<organism>
    <name type="scientific">Geobacillus thermodenitrificans (strain NG80-2)</name>
    <dbReference type="NCBI Taxonomy" id="420246"/>
    <lineage>
        <taxon>Bacteria</taxon>
        <taxon>Bacillati</taxon>
        <taxon>Bacillota</taxon>
        <taxon>Bacilli</taxon>
        <taxon>Bacillales</taxon>
        <taxon>Anoxybacillaceae</taxon>
        <taxon>Geobacillus</taxon>
    </lineage>
</organism>
<comment type="function">
    <text evidence="1">Endonuclease that resolves Holliday junction intermediates in genetic recombination. Cleaves mobile four-strand junctions by introducing symmetrical nicks in paired strands. Promotes annealing of linear ssDNA with homologous dsDNA. Required for DNA repair, homologous recombination and chromosome segregation.</text>
</comment>
<comment type="catalytic activity">
    <reaction evidence="1">
        <text>Endonucleolytic cleavage at a junction such as a reciprocal single-stranded crossover between two homologous DNA duplexes (Holliday junction).</text>
        <dbReference type="EC" id="3.1.21.10"/>
    </reaction>
</comment>
<comment type="cofactor">
    <cofactor evidence="1">
        <name>Mg(2+)</name>
        <dbReference type="ChEBI" id="CHEBI:18420"/>
    </cofactor>
    <text evidence="1">Binds 1 Mg(2+) ion per subunit.</text>
</comment>
<comment type="subcellular location">
    <subcellularLocation>
        <location evidence="1">Cytoplasm</location>
    </subcellularLocation>
</comment>
<comment type="similarity">
    <text evidence="1">Belongs to the RecU family.</text>
</comment>
<name>RECU_GEOTN</name>
<gene>
    <name evidence="1" type="primary">recU</name>
    <name type="ordered locus">GTNG_2101</name>
</gene>
<keyword id="KW-0963">Cytoplasm</keyword>
<keyword id="KW-0227">DNA damage</keyword>
<keyword id="KW-0233">DNA recombination</keyword>
<keyword id="KW-0234">DNA repair</keyword>
<keyword id="KW-0255">Endonuclease</keyword>
<keyword id="KW-0378">Hydrolase</keyword>
<keyword id="KW-0460">Magnesium</keyword>
<keyword id="KW-0479">Metal-binding</keyword>
<keyword id="KW-0540">Nuclease</keyword>
<proteinExistence type="inferred from homology"/>
<reference key="1">
    <citation type="journal article" date="2007" name="Proc. Natl. Acad. Sci. U.S.A.">
        <title>Genome and proteome of long-chain alkane degrading Geobacillus thermodenitrificans NG80-2 isolated from a deep-subsurface oil reservoir.</title>
        <authorList>
            <person name="Feng L."/>
            <person name="Wang W."/>
            <person name="Cheng J."/>
            <person name="Ren Y."/>
            <person name="Zhao G."/>
            <person name="Gao C."/>
            <person name="Tang Y."/>
            <person name="Liu X."/>
            <person name="Han W."/>
            <person name="Peng X."/>
            <person name="Liu R."/>
            <person name="Wang L."/>
        </authorList>
    </citation>
    <scope>NUCLEOTIDE SEQUENCE [LARGE SCALE GENOMIC DNA]</scope>
    <source>
        <strain>NG80-2</strain>
    </source>
</reference>
<dbReference type="EC" id="3.1.21.10" evidence="1"/>
<dbReference type="EMBL" id="CP000557">
    <property type="protein sequence ID" value="ABO67453.1"/>
    <property type="molecule type" value="Genomic_DNA"/>
</dbReference>
<dbReference type="RefSeq" id="WP_011887677.1">
    <property type="nucleotide sequence ID" value="NC_009328.1"/>
</dbReference>
<dbReference type="SMR" id="A4IQ49"/>
<dbReference type="KEGG" id="gtn:GTNG_2101"/>
<dbReference type="eggNOG" id="COG3331">
    <property type="taxonomic scope" value="Bacteria"/>
</dbReference>
<dbReference type="HOGENOM" id="CLU_096340_0_0_9"/>
<dbReference type="Proteomes" id="UP000001578">
    <property type="component" value="Chromosome"/>
</dbReference>
<dbReference type="GO" id="GO:0005737">
    <property type="term" value="C:cytoplasm"/>
    <property type="evidence" value="ECO:0007669"/>
    <property type="project" value="UniProtKB-SubCell"/>
</dbReference>
<dbReference type="GO" id="GO:0004519">
    <property type="term" value="F:endonuclease activity"/>
    <property type="evidence" value="ECO:0007669"/>
    <property type="project" value="UniProtKB-UniRule"/>
</dbReference>
<dbReference type="GO" id="GO:0000287">
    <property type="term" value="F:magnesium ion binding"/>
    <property type="evidence" value="ECO:0007669"/>
    <property type="project" value="UniProtKB-UniRule"/>
</dbReference>
<dbReference type="GO" id="GO:0003676">
    <property type="term" value="F:nucleic acid binding"/>
    <property type="evidence" value="ECO:0007669"/>
    <property type="project" value="InterPro"/>
</dbReference>
<dbReference type="GO" id="GO:0007059">
    <property type="term" value="P:chromosome segregation"/>
    <property type="evidence" value="ECO:0007669"/>
    <property type="project" value="UniProtKB-UniRule"/>
</dbReference>
<dbReference type="GO" id="GO:0006310">
    <property type="term" value="P:DNA recombination"/>
    <property type="evidence" value="ECO:0007669"/>
    <property type="project" value="UniProtKB-UniRule"/>
</dbReference>
<dbReference type="GO" id="GO:0006281">
    <property type="term" value="P:DNA repair"/>
    <property type="evidence" value="ECO:0007669"/>
    <property type="project" value="UniProtKB-UniRule"/>
</dbReference>
<dbReference type="CDD" id="cd22354">
    <property type="entry name" value="RecU-like"/>
    <property type="match status" value="1"/>
</dbReference>
<dbReference type="Gene3D" id="3.40.1350.10">
    <property type="match status" value="1"/>
</dbReference>
<dbReference type="HAMAP" id="MF_00130">
    <property type="entry name" value="RecU"/>
    <property type="match status" value="1"/>
</dbReference>
<dbReference type="InterPro" id="IPR004612">
    <property type="entry name" value="Resolv_RecU"/>
</dbReference>
<dbReference type="InterPro" id="IPR011335">
    <property type="entry name" value="Restrct_endonuc-II-like"/>
</dbReference>
<dbReference type="InterPro" id="IPR011856">
    <property type="entry name" value="tRNA_endonuc-like_dom_sf"/>
</dbReference>
<dbReference type="NCBIfam" id="NF002581">
    <property type="entry name" value="PRK02234.1-2"/>
    <property type="match status" value="1"/>
</dbReference>
<dbReference type="NCBIfam" id="NF002584">
    <property type="entry name" value="PRK02234.1-5"/>
    <property type="match status" value="1"/>
</dbReference>
<dbReference type="NCBIfam" id="TIGR00648">
    <property type="entry name" value="recU"/>
    <property type="match status" value="1"/>
</dbReference>
<dbReference type="Pfam" id="PF03838">
    <property type="entry name" value="RecU"/>
    <property type="match status" value="1"/>
</dbReference>
<dbReference type="PIRSF" id="PIRSF037785">
    <property type="entry name" value="RecU"/>
    <property type="match status" value="1"/>
</dbReference>
<dbReference type="SUPFAM" id="SSF52980">
    <property type="entry name" value="Restriction endonuclease-like"/>
    <property type="match status" value="1"/>
</dbReference>
<sequence length="201" mass="23327">MALKYPGGKEYRGNRLNAARQPMAADYANRGMTLEEDLNATNEYYRERGIAVVYKKPTPVQIVRVDYPKRSAAVIKEAYFRQASTTDYNGVYRGKYIDFEAKETKNKTAFPLKNFHAHQIRHMEQVMAHGGICFAILRFSVLNETYLLDAFHLIARWNEQEAGGRKSIPKREIEQYGHYIPLGYQPRIDYISVVEKVYFTV</sequence>
<accession>A4IQ49</accession>